<comment type="function">
    <text evidence="1">Plays a critical role in the incorporation of lipoproteins in the outer membrane after they are released by the LolA protein.</text>
</comment>
<comment type="subunit">
    <text evidence="1">Monomer.</text>
</comment>
<comment type="subcellular location">
    <subcellularLocation>
        <location evidence="1">Cell outer membrane</location>
        <topology evidence="1">Lipid-anchor</topology>
    </subcellularLocation>
</comment>
<comment type="similarity">
    <text evidence="1">Belongs to the LolB family.</text>
</comment>
<proteinExistence type="inferred from homology"/>
<reference key="1">
    <citation type="journal article" date="2008" name="Genome Res.">
        <title>Genome sequence of the beta-rhizobium Cupriavidus taiwanensis and comparative genomics of rhizobia.</title>
        <authorList>
            <person name="Amadou C."/>
            <person name="Pascal G."/>
            <person name="Mangenot S."/>
            <person name="Glew M."/>
            <person name="Bontemps C."/>
            <person name="Capela D."/>
            <person name="Carrere S."/>
            <person name="Cruveiller S."/>
            <person name="Dossat C."/>
            <person name="Lajus A."/>
            <person name="Marchetti M."/>
            <person name="Poinsot V."/>
            <person name="Rouy Z."/>
            <person name="Servin B."/>
            <person name="Saad M."/>
            <person name="Schenowitz C."/>
            <person name="Barbe V."/>
            <person name="Batut J."/>
            <person name="Medigue C."/>
            <person name="Masson-Boivin C."/>
        </authorList>
    </citation>
    <scope>NUCLEOTIDE SEQUENCE [LARGE SCALE GENOMIC DNA]</scope>
    <source>
        <strain>DSM 17343 / BCRC 17206 / CCUG 44338 / CIP 107171 / LMG 19424 / R1</strain>
    </source>
</reference>
<dbReference type="EMBL" id="CU633749">
    <property type="protein sequence ID" value="CAP62989.1"/>
    <property type="molecule type" value="Genomic_DNA"/>
</dbReference>
<dbReference type="RefSeq" id="WP_012351656.1">
    <property type="nucleotide sequence ID" value="NC_010528.1"/>
</dbReference>
<dbReference type="SMR" id="B2AGU0"/>
<dbReference type="GeneID" id="29761531"/>
<dbReference type="KEGG" id="cti:RALTA_A0319"/>
<dbReference type="eggNOG" id="COG3017">
    <property type="taxonomic scope" value="Bacteria"/>
</dbReference>
<dbReference type="HOGENOM" id="CLU_092816_3_0_4"/>
<dbReference type="BioCyc" id="CTAI977880:RALTA_RS01560-MONOMER"/>
<dbReference type="Proteomes" id="UP000001692">
    <property type="component" value="Chromosome 1"/>
</dbReference>
<dbReference type="GO" id="GO:0009279">
    <property type="term" value="C:cell outer membrane"/>
    <property type="evidence" value="ECO:0007669"/>
    <property type="project" value="UniProtKB-SubCell"/>
</dbReference>
<dbReference type="GO" id="GO:0044874">
    <property type="term" value="P:lipoprotein localization to outer membrane"/>
    <property type="evidence" value="ECO:0007669"/>
    <property type="project" value="UniProtKB-UniRule"/>
</dbReference>
<dbReference type="GO" id="GO:0015031">
    <property type="term" value="P:protein transport"/>
    <property type="evidence" value="ECO:0007669"/>
    <property type="project" value="UniProtKB-KW"/>
</dbReference>
<dbReference type="CDD" id="cd16326">
    <property type="entry name" value="LolB"/>
    <property type="match status" value="1"/>
</dbReference>
<dbReference type="Gene3D" id="2.50.20.10">
    <property type="entry name" value="Lipoprotein localisation LolA/LolB/LppX"/>
    <property type="match status" value="1"/>
</dbReference>
<dbReference type="HAMAP" id="MF_00233">
    <property type="entry name" value="LolB"/>
    <property type="match status" value="1"/>
</dbReference>
<dbReference type="InterPro" id="IPR029046">
    <property type="entry name" value="LolA/LolB/LppX"/>
</dbReference>
<dbReference type="InterPro" id="IPR004565">
    <property type="entry name" value="OM_lipoprot_LolB"/>
</dbReference>
<dbReference type="Pfam" id="PF03550">
    <property type="entry name" value="LolB"/>
    <property type="match status" value="1"/>
</dbReference>
<dbReference type="SUPFAM" id="SSF89392">
    <property type="entry name" value="Prokaryotic lipoproteins and lipoprotein localization factors"/>
    <property type="match status" value="1"/>
</dbReference>
<dbReference type="PROSITE" id="PS51257">
    <property type="entry name" value="PROKAR_LIPOPROTEIN"/>
    <property type="match status" value="1"/>
</dbReference>
<protein>
    <recommendedName>
        <fullName evidence="1">Outer-membrane lipoprotein LolB</fullName>
    </recommendedName>
</protein>
<gene>
    <name evidence="1" type="primary">lolB</name>
    <name type="ordered locus">RALTA_A0319</name>
</gene>
<keyword id="KW-0998">Cell outer membrane</keyword>
<keyword id="KW-0143">Chaperone</keyword>
<keyword id="KW-0449">Lipoprotein</keyword>
<keyword id="KW-0472">Membrane</keyword>
<keyword id="KW-0564">Palmitate</keyword>
<keyword id="KW-0653">Protein transport</keyword>
<keyword id="KW-0732">Signal</keyword>
<keyword id="KW-0813">Transport</keyword>
<evidence type="ECO:0000255" key="1">
    <source>
        <dbReference type="HAMAP-Rule" id="MF_00233"/>
    </source>
</evidence>
<accession>B2AGU0</accession>
<name>LOLB_CUPTR</name>
<feature type="signal peptide" evidence="1">
    <location>
        <begin position="1"/>
        <end position="20"/>
    </location>
</feature>
<feature type="chain" id="PRO_1000100494" description="Outer-membrane lipoprotein LolB">
    <location>
        <begin position="21"/>
        <end position="203"/>
    </location>
</feature>
<feature type="lipid moiety-binding region" description="N-palmitoyl cysteine" evidence="1">
    <location>
        <position position="21"/>
    </location>
</feature>
<feature type="lipid moiety-binding region" description="S-diacylglycerol cysteine" evidence="1">
    <location>
        <position position="21"/>
    </location>
</feature>
<organism>
    <name type="scientific">Cupriavidus taiwanensis (strain DSM 17343 / BCRC 17206 / CCUG 44338 / CIP 107171 / LMG 19424 / R1)</name>
    <name type="common">Ralstonia taiwanensis (strain LMG 19424)</name>
    <dbReference type="NCBI Taxonomy" id="977880"/>
    <lineage>
        <taxon>Bacteria</taxon>
        <taxon>Pseudomonadati</taxon>
        <taxon>Pseudomonadota</taxon>
        <taxon>Betaproteobacteria</taxon>
        <taxon>Burkholderiales</taxon>
        <taxon>Burkholderiaceae</taxon>
        <taxon>Cupriavidus</taxon>
    </lineage>
</organism>
<sequence>MNRSRRLALLCLGVPLLLQACASVAPSRSFDVDQDAASRQYTGRFSANYVRYGRDEGVQGSFRWEEQGRNVRLDLVSPLGQTLAVVTATPSGATLDLPNQPPRNAPEVDTLMEEALGFALPVAGMRDWLHGRATQGSPARATRDEQGRLATLAQNGWTVRYVAWQDTPAPGAAATQVPRRIDLARDAGSNPLSVRLVIDPQTP</sequence>